<dbReference type="EMBL" id="AM889285">
    <property type="protein sequence ID" value="CAP57350.1"/>
    <property type="molecule type" value="Genomic_DNA"/>
</dbReference>
<dbReference type="EMBL" id="CP001189">
    <property type="protein sequence ID" value="ACI52693.1"/>
    <property type="molecule type" value="Genomic_DNA"/>
</dbReference>
<dbReference type="RefSeq" id="WP_012227965.1">
    <property type="nucleotide sequence ID" value="NC_010125.1"/>
</dbReference>
<dbReference type="SMR" id="A9H3R8"/>
<dbReference type="STRING" id="272568.GDI3407"/>
<dbReference type="KEGG" id="gdi:GDI3407"/>
<dbReference type="KEGG" id="gdj:Gdia_2963"/>
<dbReference type="eggNOG" id="COG0049">
    <property type="taxonomic scope" value="Bacteria"/>
</dbReference>
<dbReference type="HOGENOM" id="CLU_072226_1_1_5"/>
<dbReference type="OrthoDB" id="9807653at2"/>
<dbReference type="Proteomes" id="UP000001176">
    <property type="component" value="Chromosome"/>
</dbReference>
<dbReference type="GO" id="GO:0015935">
    <property type="term" value="C:small ribosomal subunit"/>
    <property type="evidence" value="ECO:0007669"/>
    <property type="project" value="InterPro"/>
</dbReference>
<dbReference type="GO" id="GO:0019843">
    <property type="term" value="F:rRNA binding"/>
    <property type="evidence" value="ECO:0007669"/>
    <property type="project" value="UniProtKB-UniRule"/>
</dbReference>
<dbReference type="GO" id="GO:0003735">
    <property type="term" value="F:structural constituent of ribosome"/>
    <property type="evidence" value="ECO:0007669"/>
    <property type="project" value="InterPro"/>
</dbReference>
<dbReference type="GO" id="GO:0000049">
    <property type="term" value="F:tRNA binding"/>
    <property type="evidence" value="ECO:0007669"/>
    <property type="project" value="UniProtKB-UniRule"/>
</dbReference>
<dbReference type="GO" id="GO:0006412">
    <property type="term" value="P:translation"/>
    <property type="evidence" value="ECO:0007669"/>
    <property type="project" value="UniProtKB-UniRule"/>
</dbReference>
<dbReference type="CDD" id="cd14869">
    <property type="entry name" value="uS7_Bacteria"/>
    <property type="match status" value="1"/>
</dbReference>
<dbReference type="FunFam" id="1.10.455.10:FF:000001">
    <property type="entry name" value="30S ribosomal protein S7"/>
    <property type="match status" value="1"/>
</dbReference>
<dbReference type="Gene3D" id="1.10.455.10">
    <property type="entry name" value="Ribosomal protein S7 domain"/>
    <property type="match status" value="1"/>
</dbReference>
<dbReference type="HAMAP" id="MF_00480_B">
    <property type="entry name" value="Ribosomal_uS7_B"/>
    <property type="match status" value="1"/>
</dbReference>
<dbReference type="InterPro" id="IPR000235">
    <property type="entry name" value="Ribosomal_uS7"/>
</dbReference>
<dbReference type="InterPro" id="IPR005717">
    <property type="entry name" value="Ribosomal_uS7_bac/org-type"/>
</dbReference>
<dbReference type="InterPro" id="IPR020606">
    <property type="entry name" value="Ribosomal_uS7_CS"/>
</dbReference>
<dbReference type="InterPro" id="IPR023798">
    <property type="entry name" value="Ribosomal_uS7_dom"/>
</dbReference>
<dbReference type="InterPro" id="IPR036823">
    <property type="entry name" value="Ribosomal_uS7_dom_sf"/>
</dbReference>
<dbReference type="NCBIfam" id="TIGR01029">
    <property type="entry name" value="rpsG_bact"/>
    <property type="match status" value="1"/>
</dbReference>
<dbReference type="PANTHER" id="PTHR11205">
    <property type="entry name" value="RIBOSOMAL PROTEIN S7"/>
    <property type="match status" value="1"/>
</dbReference>
<dbReference type="Pfam" id="PF00177">
    <property type="entry name" value="Ribosomal_S7"/>
    <property type="match status" value="1"/>
</dbReference>
<dbReference type="PIRSF" id="PIRSF002122">
    <property type="entry name" value="RPS7p_RPS7a_RPS5e_RPS7o"/>
    <property type="match status" value="1"/>
</dbReference>
<dbReference type="SUPFAM" id="SSF47973">
    <property type="entry name" value="Ribosomal protein S7"/>
    <property type="match status" value="1"/>
</dbReference>
<dbReference type="PROSITE" id="PS00052">
    <property type="entry name" value="RIBOSOMAL_S7"/>
    <property type="match status" value="1"/>
</dbReference>
<keyword id="KW-1185">Reference proteome</keyword>
<keyword id="KW-0687">Ribonucleoprotein</keyword>
<keyword id="KW-0689">Ribosomal protein</keyword>
<keyword id="KW-0694">RNA-binding</keyword>
<keyword id="KW-0699">rRNA-binding</keyword>
<keyword id="KW-0820">tRNA-binding</keyword>
<sequence>MSRRHRAVKREILPDPKFGDVVITRFMNALMYDGKKSTAEGIVYGALEVLRRRGGASADPVVMFHSALDNVKPAVEVRSRRVGGATYQVPVEVRTERRQALAIRWLIDASRKRGENTMQERLSNELLDAVNNRGSAVKKREDTHRMAEANKAFSHYRW</sequence>
<organism>
    <name type="scientific">Gluconacetobacter diazotrophicus (strain ATCC 49037 / DSM 5601 / CCUG 37298 / CIP 103539 / LMG 7603 / PAl5)</name>
    <dbReference type="NCBI Taxonomy" id="272568"/>
    <lineage>
        <taxon>Bacteria</taxon>
        <taxon>Pseudomonadati</taxon>
        <taxon>Pseudomonadota</taxon>
        <taxon>Alphaproteobacteria</taxon>
        <taxon>Acetobacterales</taxon>
        <taxon>Acetobacteraceae</taxon>
        <taxon>Gluconacetobacter</taxon>
    </lineage>
</organism>
<gene>
    <name evidence="1" type="primary">rpsG</name>
    <name type="ordered locus">GDI3407</name>
    <name type="ordered locus">Gdia_2963</name>
</gene>
<feature type="chain" id="PRO_1000081284" description="Small ribosomal subunit protein uS7">
    <location>
        <begin position="1"/>
        <end position="158"/>
    </location>
</feature>
<protein>
    <recommendedName>
        <fullName evidence="1">Small ribosomal subunit protein uS7</fullName>
    </recommendedName>
    <alternativeName>
        <fullName evidence="2">30S ribosomal protein S7</fullName>
    </alternativeName>
</protein>
<reference key="1">
    <citation type="journal article" date="2009" name="BMC Genomics">
        <title>Complete genome sequence of the sugarcane nitrogen-fixing endophyte Gluconacetobacter diazotrophicus Pal5.</title>
        <authorList>
            <person name="Bertalan M."/>
            <person name="Albano R."/>
            <person name="de Padua V."/>
            <person name="Rouws L."/>
            <person name="Rojas C."/>
            <person name="Hemerly A."/>
            <person name="Teixeira K."/>
            <person name="Schwab S."/>
            <person name="Araujo J."/>
            <person name="Oliveira A."/>
            <person name="Franca L."/>
            <person name="Magalhaes V."/>
            <person name="Alqueres S."/>
            <person name="Cardoso A."/>
            <person name="Almeida W."/>
            <person name="Loureiro M.M."/>
            <person name="Nogueira E."/>
            <person name="Cidade D."/>
            <person name="Oliveira D."/>
            <person name="Simao T."/>
            <person name="Macedo J."/>
            <person name="Valadao A."/>
            <person name="Dreschsel M."/>
            <person name="Freitas F."/>
            <person name="Vidal M."/>
            <person name="Guedes H."/>
            <person name="Rodrigues E."/>
            <person name="Meneses C."/>
            <person name="Brioso P."/>
            <person name="Pozzer L."/>
            <person name="Figueiredo D."/>
            <person name="Montano H."/>
            <person name="Junior J."/>
            <person name="de Souza Filho G."/>
            <person name="Martin Quintana Flores V."/>
            <person name="Ferreira B."/>
            <person name="Branco A."/>
            <person name="Gonzalez P."/>
            <person name="Guillobel H."/>
            <person name="Lemos M."/>
            <person name="Seibel L."/>
            <person name="Macedo J."/>
            <person name="Alves-Ferreira M."/>
            <person name="Sachetto-Martins G."/>
            <person name="Coelho A."/>
            <person name="Santos E."/>
            <person name="Amaral G."/>
            <person name="Neves A."/>
            <person name="Pacheco A.B."/>
            <person name="Carvalho D."/>
            <person name="Lery L."/>
            <person name="Bisch P."/>
            <person name="Rossle S.C."/>
            <person name="Urmenyi T."/>
            <person name="Rael Pereira A."/>
            <person name="Silva R."/>
            <person name="Rondinelli E."/>
            <person name="von Kruger W."/>
            <person name="Martins O."/>
            <person name="Baldani J.I."/>
            <person name="Ferreira P.C."/>
        </authorList>
    </citation>
    <scope>NUCLEOTIDE SEQUENCE [LARGE SCALE GENOMIC DNA]</scope>
    <source>
        <strain>ATCC 49037 / DSM 5601 / CCUG 37298 / CIP 103539 / LMG 7603 / PAl5</strain>
    </source>
</reference>
<reference key="2">
    <citation type="journal article" date="2010" name="Stand. Genomic Sci.">
        <title>Two genome sequences of the same bacterial strain, Gluconacetobacter diazotrophicus PAl 5, suggest a new standard in genome sequence submission.</title>
        <authorList>
            <person name="Giongo A."/>
            <person name="Tyler H.L."/>
            <person name="Zipperer U.N."/>
            <person name="Triplett E.W."/>
        </authorList>
    </citation>
    <scope>NUCLEOTIDE SEQUENCE [LARGE SCALE GENOMIC DNA]</scope>
    <source>
        <strain>ATCC 49037 / DSM 5601 / CCUG 37298 / CIP 103539 / LMG 7603 / PAl5</strain>
    </source>
</reference>
<name>RS7_GLUDA</name>
<comment type="function">
    <text evidence="1">One of the primary rRNA binding proteins, it binds directly to 16S rRNA where it nucleates assembly of the head domain of the 30S subunit. Is located at the subunit interface close to the decoding center, probably blocks exit of the E-site tRNA.</text>
</comment>
<comment type="subunit">
    <text evidence="1">Part of the 30S ribosomal subunit. Contacts proteins S9 and S11.</text>
</comment>
<comment type="similarity">
    <text evidence="1">Belongs to the universal ribosomal protein uS7 family.</text>
</comment>
<accession>A9H3R8</accession>
<accession>B5ZIG0</accession>
<evidence type="ECO:0000255" key="1">
    <source>
        <dbReference type="HAMAP-Rule" id="MF_00480"/>
    </source>
</evidence>
<evidence type="ECO:0000305" key="2"/>
<proteinExistence type="inferred from homology"/>